<name>DNAJ_YERPP</name>
<sequence>MAKRDYYEVLGVSRDAEEREIKKAYKRLAMKFHPDRQSEDKNAEEKFKEAKEAYEILTDAQKRAAYDQYGHAAFEQGGMGGGGFGGGGGGADFSDIFGDVFGDIFGGGRRQQRASRGSDLRYNMDLTLEEAVRGVTKEIRIPTLDECDVCHGSGAKPGSSPVTCPTCHGAGQVQMRQGFFTVQQACPHCHGRGQIIKDPCNKCHGHGRVEKSKTLSVKIPAGVDTGDRIRLSGEGEAGEHGAPSGDLYVQVQVKAHPIFEREGNNLYCEVPINFAMAALGGEIEVPTLDGRVKLKIPAETQTGKMFRMRGKGVKSVRGGSQGDLLCRVVVETPVSLSEKQKQLLRELEESFVGAAGEKNSPRAKSFLDGVKKFFDDLTR</sequence>
<dbReference type="EMBL" id="CP000668">
    <property type="protein sequence ID" value="ABP41520.1"/>
    <property type="molecule type" value="Genomic_DNA"/>
</dbReference>
<dbReference type="RefSeq" id="WP_002209249.1">
    <property type="nucleotide sequence ID" value="NZ_CP009715.1"/>
</dbReference>
<dbReference type="SMR" id="A4TQF8"/>
<dbReference type="GeneID" id="57974140"/>
<dbReference type="KEGG" id="ypp:YPDSF_3162"/>
<dbReference type="PATRIC" id="fig|386656.14.peg.1188"/>
<dbReference type="GO" id="GO:0005737">
    <property type="term" value="C:cytoplasm"/>
    <property type="evidence" value="ECO:0007669"/>
    <property type="project" value="UniProtKB-SubCell"/>
</dbReference>
<dbReference type="GO" id="GO:0005524">
    <property type="term" value="F:ATP binding"/>
    <property type="evidence" value="ECO:0007669"/>
    <property type="project" value="InterPro"/>
</dbReference>
<dbReference type="GO" id="GO:0031072">
    <property type="term" value="F:heat shock protein binding"/>
    <property type="evidence" value="ECO:0007669"/>
    <property type="project" value="InterPro"/>
</dbReference>
<dbReference type="GO" id="GO:0051082">
    <property type="term" value="F:unfolded protein binding"/>
    <property type="evidence" value="ECO:0007669"/>
    <property type="project" value="UniProtKB-UniRule"/>
</dbReference>
<dbReference type="GO" id="GO:0008270">
    <property type="term" value="F:zinc ion binding"/>
    <property type="evidence" value="ECO:0007669"/>
    <property type="project" value="UniProtKB-UniRule"/>
</dbReference>
<dbReference type="GO" id="GO:0051085">
    <property type="term" value="P:chaperone cofactor-dependent protein refolding"/>
    <property type="evidence" value="ECO:0007669"/>
    <property type="project" value="TreeGrafter"/>
</dbReference>
<dbReference type="GO" id="GO:0006260">
    <property type="term" value="P:DNA replication"/>
    <property type="evidence" value="ECO:0007669"/>
    <property type="project" value="UniProtKB-KW"/>
</dbReference>
<dbReference type="GO" id="GO:0042026">
    <property type="term" value="P:protein refolding"/>
    <property type="evidence" value="ECO:0007669"/>
    <property type="project" value="TreeGrafter"/>
</dbReference>
<dbReference type="GO" id="GO:0009408">
    <property type="term" value="P:response to heat"/>
    <property type="evidence" value="ECO:0007669"/>
    <property type="project" value="InterPro"/>
</dbReference>
<dbReference type="CDD" id="cd06257">
    <property type="entry name" value="DnaJ"/>
    <property type="match status" value="1"/>
</dbReference>
<dbReference type="CDD" id="cd10747">
    <property type="entry name" value="DnaJ_C"/>
    <property type="match status" value="1"/>
</dbReference>
<dbReference type="CDD" id="cd10719">
    <property type="entry name" value="DnaJ_zf"/>
    <property type="match status" value="1"/>
</dbReference>
<dbReference type="FunFam" id="1.10.287.110:FF:000003">
    <property type="entry name" value="Molecular chaperone DnaJ"/>
    <property type="match status" value="1"/>
</dbReference>
<dbReference type="FunFam" id="2.10.230.10:FF:000002">
    <property type="entry name" value="Molecular chaperone DnaJ"/>
    <property type="match status" value="1"/>
</dbReference>
<dbReference type="FunFam" id="2.60.260.20:FF:000004">
    <property type="entry name" value="Molecular chaperone DnaJ"/>
    <property type="match status" value="1"/>
</dbReference>
<dbReference type="Gene3D" id="1.10.287.110">
    <property type="entry name" value="DnaJ domain"/>
    <property type="match status" value="1"/>
</dbReference>
<dbReference type="Gene3D" id="2.10.230.10">
    <property type="entry name" value="Heat shock protein DnaJ, cysteine-rich domain"/>
    <property type="match status" value="1"/>
</dbReference>
<dbReference type="Gene3D" id="2.60.260.20">
    <property type="entry name" value="Urease metallochaperone UreE, N-terminal domain"/>
    <property type="match status" value="2"/>
</dbReference>
<dbReference type="HAMAP" id="MF_01152">
    <property type="entry name" value="DnaJ"/>
    <property type="match status" value="1"/>
</dbReference>
<dbReference type="InterPro" id="IPR012724">
    <property type="entry name" value="DnaJ"/>
</dbReference>
<dbReference type="InterPro" id="IPR002939">
    <property type="entry name" value="DnaJ_C"/>
</dbReference>
<dbReference type="InterPro" id="IPR001623">
    <property type="entry name" value="DnaJ_domain"/>
</dbReference>
<dbReference type="InterPro" id="IPR018253">
    <property type="entry name" value="DnaJ_domain_CS"/>
</dbReference>
<dbReference type="InterPro" id="IPR008971">
    <property type="entry name" value="HSP40/DnaJ_pept-bd"/>
</dbReference>
<dbReference type="InterPro" id="IPR001305">
    <property type="entry name" value="HSP_DnaJ_Cys-rich_dom"/>
</dbReference>
<dbReference type="InterPro" id="IPR036410">
    <property type="entry name" value="HSP_DnaJ_Cys-rich_dom_sf"/>
</dbReference>
<dbReference type="InterPro" id="IPR036869">
    <property type="entry name" value="J_dom_sf"/>
</dbReference>
<dbReference type="NCBIfam" id="TIGR02349">
    <property type="entry name" value="DnaJ_bact"/>
    <property type="match status" value="1"/>
</dbReference>
<dbReference type="NCBIfam" id="NF008035">
    <property type="entry name" value="PRK10767.1"/>
    <property type="match status" value="1"/>
</dbReference>
<dbReference type="PANTHER" id="PTHR43096:SF48">
    <property type="entry name" value="CHAPERONE PROTEIN DNAJ"/>
    <property type="match status" value="1"/>
</dbReference>
<dbReference type="PANTHER" id="PTHR43096">
    <property type="entry name" value="DNAJ HOMOLOG 1, MITOCHONDRIAL-RELATED"/>
    <property type="match status" value="1"/>
</dbReference>
<dbReference type="Pfam" id="PF00226">
    <property type="entry name" value="DnaJ"/>
    <property type="match status" value="1"/>
</dbReference>
<dbReference type="Pfam" id="PF01556">
    <property type="entry name" value="DnaJ_C"/>
    <property type="match status" value="1"/>
</dbReference>
<dbReference type="Pfam" id="PF00684">
    <property type="entry name" value="DnaJ_CXXCXGXG"/>
    <property type="match status" value="1"/>
</dbReference>
<dbReference type="PRINTS" id="PR00625">
    <property type="entry name" value="JDOMAIN"/>
</dbReference>
<dbReference type="SMART" id="SM00271">
    <property type="entry name" value="DnaJ"/>
    <property type="match status" value="1"/>
</dbReference>
<dbReference type="SUPFAM" id="SSF46565">
    <property type="entry name" value="Chaperone J-domain"/>
    <property type="match status" value="1"/>
</dbReference>
<dbReference type="SUPFAM" id="SSF57938">
    <property type="entry name" value="DnaJ/Hsp40 cysteine-rich domain"/>
    <property type="match status" value="1"/>
</dbReference>
<dbReference type="SUPFAM" id="SSF49493">
    <property type="entry name" value="HSP40/DnaJ peptide-binding domain"/>
    <property type="match status" value="2"/>
</dbReference>
<dbReference type="PROSITE" id="PS00636">
    <property type="entry name" value="DNAJ_1"/>
    <property type="match status" value="1"/>
</dbReference>
<dbReference type="PROSITE" id="PS50076">
    <property type="entry name" value="DNAJ_2"/>
    <property type="match status" value="1"/>
</dbReference>
<dbReference type="PROSITE" id="PS51188">
    <property type="entry name" value="ZF_CR"/>
    <property type="match status" value="1"/>
</dbReference>
<protein>
    <recommendedName>
        <fullName evidence="1">Chaperone protein DnaJ</fullName>
    </recommendedName>
</protein>
<keyword id="KW-0143">Chaperone</keyword>
<keyword id="KW-0963">Cytoplasm</keyword>
<keyword id="KW-0235">DNA replication</keyword>
<keyword id="KW-0479">Metal-binding</keyword>
<keyword id="KW-0677">Repeat</keyword>
<keyword id="KW-0346">Stress response</keyword>
<keyword id="KW-0862">Zinc</keyword>
<keyword id="KW-0863">Zinc-finger</keyword>
<organism>
    <name type="scientific">Yersinia pestis (strain Pestoides F)</name>
    <dbReference type="NCBI Taxonomy" id="386656"/>
    <lineage>
        <taxon>Bacteria</taxon>
        <taxon>Pseudomonadati</taxon>
        <taxon>Pseudomonadota</taxon>
        <taxon>Gammaproteobacteria</taxon>
        <taxon>Enterobacterales</taxon>
        <taxon>Yersiniaceae</taxon>
        <taxon>Yersinia</taxon>
    </lineage>
</organism>
<accession>A4TQF8</accession>
<feature type="chain" id="PRO_1000085336" description="Chaperone protein DnaJ">
    <location>
        <begin position="1"/>
        <end position="379"/>
    </location>
</feature>
<feature type="domain" description="J" evidence="1">
    <location>
        <begin position="5"/>
        <end position="70"/>
    </location>
</feature>
<feature type="repeat" description="CXXCXGXG motif">
    <location>
        <begin position="147"/>
        <end position="154"/>
    </location>
</feature>
<feature type="repeat" description="CXXCXGXG motif">
    <location>
        <begin position="164"/>
        <end position="171"/>
    </location>
</feature>
<feature type="repeat" description="CXXCXGXG motif">
    <location>
        <begin position="186"/>
        <end position="193"/>
    </location>
</feature>
<feature type="repeat" description="CXXCXGXG motif">
    <location>
        <begin position="200"/>
        <end position="207"/>
    </location>
</feature>
<feature type="zinc finger region" description="CR-type" evidence="1">
    <location>
        <begin position="134"/>
        <end position="212"/>
    </location>
</feature>
<feature type="binding site" evidence="1">
    <location>
        <position position="147"/>
    </location>
    <ligand>
        <name>Zn(2+)</name>
        <dbReference type="ChEBI" id="CHEBI:29105"/>
        <label>1</label>
    </ligand>
</feature>
<feature type="binding site" evidence="1">
    <location>
        <position position="150"/>
    </location>
    <ligand>
        <name>Zn(2+)</name>
        <dbReference type="ChEBI" id="CHEBI:29105"/>
        <label>1</label>
    </ligand>
</feature>
<feature type="binding site" evidence="1">
    <location>
        <position position="164"/>
    </location>
    <ligand>
        <name>Zn(2+)</name>
        <dbReference type="ChEBI" id="CHEBI:29105"/>
        <label>2</label>
    </ligand>
</feature>
<feature type="binding site" evidence="1">
    <location>
        <position position="167"/>
    </location>
    <ligand>
        <name>Zn(2+)</name>
        <dbReference type="ChEBI" id="CHEBI:29105"/>
        <label>2</label>
    </ligand>
</feature>
<feature type="binding site" evidence="1">
    <location>
        <position position="186"/>
    </location>
    <ligand>
        <name>Zn(2+)</name>
        <dbReference type="ChEBI" id="CHEBI:29105"/>
        <label>2</label>
    </ligand>
</feature>
<feature type="binding site" evidence="1">
    <location>
        <position position="189"/>
    </location>
    <ligand>
        <name>Zn(2+)</name>
        <dbReference type="ChEBI" id="CHEBI:29105"/>
        <label>2</label>
    </ligand>
</feature>
<feature type="binding site" evidence="1">
    <location>
        <position position="200"/>
    </location>
    <ligand>
        <name>Zn(2+)</name>
        <dbReference type="ChEBI" id="CHEBI:29105"/>
        <label>1</label>
    </ligand>
</feature>
<feature type="binding site" evidence="1">
    <location>
        <position position="203"/>
    </location>
    <ligand>
        <name>Zn(2+)</name>
        <dbReference type="ChEBI" id="CHEBI:29105"/>
        <label>1</label>
    </ligand>
</feature>
<evidence type="ECO:0000255" key="1">
    <source>
        <dbReference type="HAMAP-Rule" id="MF_01152"/>
    </source>
</evidence>
<reference key="1">
    <citation type="submission" date="2007-02" db="EMBL/GenBank/DDBJ databases">
        <title>Complete sequence of chromosome of Yersinia pestis Pestoides F.</title>
        <authorList>
            <consortium name="US DOE Joint Genome Institute"/>
            <person name="Copeland A."/>
            <person name="Lucas S."/>
            <person name="Lapidus A."/>
            <person name="Barry K."/>
            <person name="Detter J.C."/>
            <person name="Glavina del Rio T."/>
            <person name="Hammon N."/>
            <person name="Israni S."/>
            <person name="Dalin E."/>
            <person name="Tice H."/>
            <person name="Pitluck S."/>
            <person name="Di Bartolo G."/>
            <person name="Chain P."/>
            <person name="Malfatti S."/>
            <person name="Shin M."/>
            <person name="Vergez L."/>
            <person name="Schmutz J."/>
            <person name="Larimer F."/>
            <person name="Land M."/>
            <person name="Hauser L."/>
            <person name="Worsham P."/>
            <person name="Chu M."/>
            <person name="Bearden S."/>
            <person name="Garcia E."/>
            <person name="Richardson P."/>
        </authorList>
    </citation>
    <scope>NUCLEOTIDE SEQUENCE [LARGE SCALE GENOMIC DNA]</scope>
    <source>
        <strain>Pestoides F</strain>
    </source>
</reference>
<proteinExistence type="inferred from homology"/>
<comment type="function">
    <text evidence="1">Participates actively in the response to hyperosmotic and heat shock by preventing the aggregation of stress-denatured proteins and by disaggregating proteins, also in an autonomous, DnaK-independent fashion. Unfolded proteins bind initially to DnaJ; upon interaction with the DnaJ-bound protein, DnaK hydrolyzes its bound ATP, resulting in the formation of a stable complex. GrpE releases ADP from DnaK; ATP binding to DnaK triggers the release of the substrate protein, thus completing the reaction cycle. Several rounds of ATP-dependent interactions between DnaJ, DnaK and GrpE are required for fully efficient folding. Also involved, together with DnaK and GrpE, in the DNA replication of plasmids through activation of initiation proteins.</text>
</comment>
<comment type="cofactor">
    <cofactor evidence="1">
        <name>Zn(2+)</name>
        <dbReference type="ChEBI" id="CHEBI:29105"/>
    </cofactor>
    <text evidence="1">Binds 2 Zn(2+) ions per monomer.</text>
</comment>
<comment type="subunit">
    <text evidence="1">Homodimer.</text>
</comment>
<comment type="subcellular location">
    <subcellularLocation>
        <location evidence="1">Cytoplasm</location>
    </subcellularLocation>
</comment>
<comment type="domain">
    <text evidence="1">The J domain is necessary and sufficient to stimulate DnaK ATPase activity. Zinc center 1 plays an important role in the autonomous, DnaK-independent chaperone activity of DnaJ. Zinc center 2 is essential for interaction with DnaK and for DnaJ activity.</text>
</comment>
<comment type="similarity">
    <text evidence="1">Belongs to the DnaJ family.</text>
</comment>
<gene>
    <name evidence="1" type="primary">dnaJ</name>
    <name type="ordered locus">YPDSF_3162</name>
</gene>